<sequence length="895" mass="102615">MNISVIGTGYVGLIQAVGLAEFGFDVVGIDIDESKVKALNRGECPLYEEGLEGLLKKHVNKNLTFTTSYKPIKDSDVIFLCVGTPQDKDGNADLRFLFSAVEKIKETIDKEDYKVIVIKSTVPVGTNRRVKELLKDYNVDVVSNPEFLREGIAVYDFFNPERVILGFENLNNKKPIEIMEEVYKYFKDKNIPFVITNWETAELIKYASNAFLATKISFINELAKLSDKVKADIKTISYAMGLDPRIGNKFLNAGIGYGGSCFHPDEVLFIDRGRGLECITFKELFELEDKDNVKILSFDGEKLSLKKLKLASKRYYNDDLITLRFNLGREIKITKDHPVVILEDGELKIKLTSDVKEGDKVILPYGNFGEEREIEIDILEELSKTDLIEKVWIHNKDLATNEFNIIKPYLSNKYPHDVKRNGTIRAKDILPIKEILDKYGSKNRLFTAKSKSTTIPYKIKIDKDFARLIGYYLSEGWISKDYGRNGVVRKRIGLCFGIHEEEYINDVKNILNKLGIKYIEKIKDGSHSILISSKILAYVFENILNCGINCYNKNIPPQMFNAKEEIKWEFLKGLFRGDGGIVRLNNNKNLNIEFATVSKKMAHSLLILLQLLGIVASVKKCYNNKSTTMAYIIRINGLEQVKKIGELFGKKWENYKDIAESYKRNIEPLGYKKSDNFAILEVKEIIKEHYSGYVYSVETENSLLITSYGILIHNCFPKDVKALIKQFENNNIEPILIKATDIVNEEQIKWFFEKIKNYYGNLNGKTFAVLGLAFKPNTDDLRESRAIKLIDMLLESGAIVKGFDYVEKARENTINMYKLDKSKGFYGYNLYVLDDLYETVKNVDGIIITVEYDFNKEDWEKIGNLVKEKVVFDGRNILDVEKIKKLGFKYYGVGR</sequence>
<feature type="chain" id="PRO_0000035997" description="Uncharacterized protein MJ1054, 1st part" evidence="2">
    <location>
        <begin position="1"/>
        <end position="260"/>
    </location>
</feature>
<feature type="chain" id="PRO_0000035998" description="Mja UDPGD intein" evidence="2">
    <location>
        <begin position="261"/>
        <end position="714"/>
    </location>
</feature>
<feature type="chain" id="PRO_0000035999" description="Uncharacterized protein MJ1054, 2nd part" evidence="2">
    <location>
        <begin position="715"/>
        <end position="895"/>
    </location>
</feature>
<feature type="domain" description="DOD-type homing endonuclease" evidence="3">
    <location>
        <begin position="468"/>
        <end position="614"/>
    </location>
</feature>
<feature type="active site" evidence="1">
    <location>
        <position position="261"/>
    </location>
</feature>
<feature type="binding site" evidence="2">
    <location>
        <begin position="2"/>
        <end position="19"/>
    </location>
    <ligand>
        <name>NAD(+)</name>
        <dbReference type="ChEBI" id="CHEBI:57540"/>
    </ligand>
</feature>
<evidence type="ECO:0000250" key="1"/>
<evidence type="ECO:0000255" key="2"/>
<evidence type="ECO:0000255" key="3">
    <source>
        <dbReference type="PROSITE-ProRule" id="PRU00273"/>
    </source>
</evidence>
<evidence type="ECO:0000305" key="4"/>
<organism>
    <name type="scientific">Methanocaldococcus jannaschii (strain ATCC 43067 / DSM 2661 / JAL-1 / JCM 10045 / NBRC 100440)</name>
    <name type="common">Methanococcus jannaschii</name>
    <dbReference type="NCBI Taxonomy" id="243232"/>
    <lineage>
        <taxon>Archaea</taxon>
        <taxon>Methanobacteriati</taxon>
        <taxon>Methanobacteriota</taxon>
        <taxon>Methanomada group</taxon>
        <taxon>Methanococci</taxon>
        <taxon>Methanococcales</taxon>
        <taxon>Methanocaldococcaceae</taxon>
        <taxon>Methanocaldococcus</taxon>
    </lineage>
</organism>
<gene>
    <name type="ordered locus">MJ1054</name>
</gene>
<protein>
    <recommendedName>
        <fullName>Uncharacterized protein MJ1054</fullName>
        <ecNumber>1.1.1.-</ecNumber>
    </recommendedName>
    <component>
        <recommendedName>
            <fullName>Mja UDPGD intein</fullName>
        </recommendedName>
    </component>
</protein>
<accession>Q58454</accession>
<comment type="PTM">
    <text evidence="4">This protein undergoes a protein self splicing that involves a post-translational excision of the intervening region (intein) followed by peptide ligation.</text>
</comment>
<comment type="similarity">
    <text evidence="4">Belongs to the UDP-glucose/GDP-mannose dehydrogenase family.</text>
</comment>
<keyword id="KW-0068">Autocatalytic cleavage</keyword>
<keyword id="KW-0520">NAD</keyword>
<keyword id="KW-0560">Oxidoreductase</keyword>
<keyword id="KW-0651">Protein splicing</keyword>
<keyword id="KW-1185">Reference proteome</keyword>
<proteinExistence type="inferred from homology"/>
<name>Y1054_METJA</name>
<dbReference type="EC" id="1.1.1.-"/>
<dbReference type="EMBL" id="L77117">
    <property type="protein sequence ID" value="AAB99056.1"/>
    <property type="molecule type" value="Genomic_DNA"/>
</dbReference>
<dbReference type="PIR" id="E64431">
    <property type="entry name" value="E64431"/>
</dbReference>
<dbReference type="RefSeq" id="WP_010870567.1">
    <property type="nucleotide sequence ID" value="NC_000909.1"/>
</dbReference>
<dbReference type="SMR" id="Q58454"/>
<dbReference type="FunCoup" id="Q58454">
    <property type="interactions" value="194"/>
</dbReference>
<dbReference type="STRING" id="243232.MJ_1054"/>
<dbReference type="PaxDb" id="243232-MJ_1054"/>
<dbReference type="EnsemblBacteria" id="AAB99056">
    <property type="protein sequence ID" value="AAB99056"/>
    <property type="gene ID" value="MJ_1054"/>
</dbReference>
<dbReference type="GeneID" id="1451951"/>
<dbReference type="KEGG" id="mja:MJ_1054"/>
<dbReference type="eggNOG" id="arCOG00253">
    <property type="taxonomic scope" value="Archaea"/>
</dbReference>
<dbReference type="HOGENOM" id="CLU_320207_0_0_2"/>
<dbReference type="InParanoid" id="Q58454"/>
<dbReference type="OrthoDB" id="59839at2157"/>
<dbReference type="PhylomeDB" id="Q58454"/>
<dbReference type="Proteomes" id="UP000000805">
    <property type="component" value="Chromosome"/>
</dbReference>
<dbReference type="GO" id="GO:0004519">
    <property type="term" value="F:endonuclease activity"/>
    <property type="evidence" value="ECO:0007669"/>
    <property type="project" value="InterPro"/>
</dbReference>
<dbReference type="GO" id="GO:0051287">
    <property type="term" value="F:NAD binding"/>
    <property type="evidence" value="ECO:0007669"/>
    <property type="project" value="InterPro"/>
</dbReference>
<dbReference type="GO" id="GO:0016616">
    <property type="term" value="F:oxidoreductase activity, acting on the CH-OH group of donors, NAD or NADP as acceptor"/>
    <property type="evidence" value="ECO:0007669"/>
    <property type="project" value="InterPro"/>
</dbReference>
<dbReference type="GO" id="GO:0016539">
    <property type="term" value="P:intein-mediated protein splicing"/>
    <property type="evidence" value="ECO:0007669"/>
    <property type="project" value="InterPro"/>
</dbReference>
<dbReference type="CDD" id="cd00081">
    <property type="entry name" value="Hint"/>
    <property type="match status" value="1"/>
</dbReference>
<dbReference type="Gene3D" id="1.20.5.100">
    <property type="entry name" value="Cytochrome c1, transmembrane anchor, C-terminal"/>
    <property type="match status" value="1"/>
</dbReference>
<dbReference type="Gene3D" id="2.170.16.10">
    <property type="entry name" value="Hedgehog/Intein (Hint) domain"/>
    <property type="match status" value="1"/>
</dbReference>
<dbReference type="Gene3D" id="3.10.28.10">
    <property type="entry name" value="Homing endonucleases"/>
    <property type="match status" value="1"/>
</dbReference>
<dbReference type="Gene3D" id="3.40.50.720">
    <property type="entry name" value="NAD(P)-binding Rossmann-like Domain"/>
    <property type="match status" value="3"/>
</dbReference>
<dbReference type="InterPro" id="IPR008927">
    <property type="entry name" value="6-PGluconate_DH-like_C_sf"/>
</dbReference>
<dbReference type="InterPro" id="IPR003586">
    <property type="entry name" value="Hint_dom_C"/>
</dbReference>
<dbReference type="InterPro" id="IPR003587">
    <property type="entry name" value="Hint_dom_N"/>
</dbReference>
<dbReference type="InterPro" id="IPR036844">
    <property type="entry name" value="Hint_dom_sf"/>
</dbReference>
<dbReference type="InterPro" id="IPR027434">
    <property type="entry name" value="Homing_endonucl"/>
</dbReference>
<dbReference type="InterPro" id="IPR006142">
    <property type="entry name" value="INTEIN"/>
</dbReference>
<dbReference type="InterPro" id="IPR030934">
    <property type="entry name" value="Intein_C"/>
</dbReference>
<dbReference type="InterPro" id="IPR004042">
    <property type="entry name" value="Intein_endonuc_central"/>
</dbReference>
<dbReference type="InterPro" id="IPR006141">
    <property type="entry name" value="Intein_N"/>
</dbReference>
<dbReference type="InterPro" id="IPR004860">
    <property type="entry name" value="LAGLIDADG_dom"/>
</dbReference>
<dbReference type="InterPro" id="IPR036291">
    <property type="entry name" value="NAD(P)-bd_dom_sf"/>
</dbReference>
<dbReference type="InterPro" id="IPR017476">
    <property type="entry name" value="UDP-Glc/GDP-Man"/>
</dbReference>
<dbReference type="InterPro" id="IPR014027">
    <property type="entry name" value="UDP-Glc/GDP-Man_DH_C"/>
</dbReference>
<dbReference type="InterPro" id="IPR036220">
    <property type="entry name" value="UDP-Glc/GDP-Man_DH_C_sf"/>
</dbReference>
<dbReference type="InterPro" id="IPR014026">
    <property type="entry name" value="UDP-Glc/GDP-Man_DH_dimer"/>
</dbReference>
<dbReference type="InterPro" id="IPR001732">
    <property type="entry name" value="UDP-Glc/GDP-Man_DH_N"/>
</dbReference>
<dbReference type="NCBIfam" id="TIGR01443">
    <property type="entry name" value="intein_Cterm"/>
    <property type="match status" value="1"/>
</dbReference>
<dbReference type="NCBIfam" id="TIGR01445">
    <property type="entry name" value="intein_Nterm"/>
    <property type="match status" value="1"/>
</dbReference>
<dbReference type="NCBIfam" id="TIGR03026">
    <property type="entry name" value="NDP-sugDHase"/>
    <property type="match status" value="1"/>
</dbReference>
<dbReference type="PANTHER" id="PTHR43750">
    <property type="entry name" value="UDP-GLUCOSE 6-DEHYDROGENASE TUAD"/>
    <property type="match status" value="1"/>
</dbReference>
<dbReference type="PANTHER" id="PTHR43750:SF3">
    <property type="entry name" value="UDP-GLUCOSE 6-DEHYDROGENASE TUAD"/>
    <property type="match status" value="1"/>
</dbReference>
<dbReference type="Pfam" id="PF14890">
    <property type="entry name" value="Intein_splicing"/>
    <property type="match status" value="1"/>
</dbReference>
<dbReference type="Pfam" id="PF14528">
    <property type="entry name" value="LAGLIDADG_3"/>
    <property type="match status" value="2"/>
</dbReference>
<dbReference type="Pfam" id="PF00984">
    <property type="entry name" value="UDPG_MGDP_dh"/>
    <property type="match status" value="1"/>
</dbReference>
<dbReference type="Pfam" id="PF03720">
    <property type="entry name" value="UDPG_MGDP_dh_C"/>
    <property type="match status" value="1"/>
</dbReference>
<dbReference type="Pfam" id="PF03721">
    <property type="entry name" value="UDPG_MGDP_dh_N"/>
    <property type="match status" value="1"/>
</dbReference>
<dbReference type="PRINTS" id="PR00379">
    <property type="entry name" value="INTEIN"/>
</dbReference>
<dbReference type="SMART" id="SM00305">
    <property type="entry name" value="HintC"/>
    <property type="match status" value="1"/>
</dbReference>
<dbReference type="SMART" id="SM00306">
    <property type="entry name" value="HintN"/>
    <property type="match status" value="1"/>
</dbReference>
<dbReference type="SMART" id="SM00984">
    <property type="entry name" value="UDPG_MGDP_dh_C"/>
    <property type="match status" value="1"/>
</dbReference>
<dbReference type="SUPFAM" id="SSF48179">
    <property type="entry name" value="6-phosphogluconate dehydrogenase C-terminal domain-like"/>
    <property type="match status" value="1"/>
</dbReference>
<dbReference type="SUPFAM" id="SSF51294">
    <property type="entry name" value="Hedgehog/intein (Hint) domain"/>
    <property type="match status" value="1"/>
</dbReference>
<dbReference type="SUPFAM" id="SSF55608">
    <property type="entry name" value="Homing endonucleases"/>
    <property type="match status" value="2"/>
</dbReference>
<dbReference type="SUPFAM" id="SSF51735">
    <property type="entry name" value="NAD(P)-binding Rossmann-fold domains"/>
    <property type="match status" value="1"/>
</dbReference>
<dbReference type="SUPFAM" id="SSF52413">
    <property type="entry name" value="UDP-glucose/GDP-mannose dehydrogenase C-terminal domain"/>
    <property type="match status" value="1"/>
</dbReference>
<dbReference type="PROSITE" id="PS50818">
    <property type="entry name" value="INTEIN_C_TER"/>
    <property type="match status" value="1"/>
</dbReference>
<dbReference type="PROSITE" id="PS50819">
    <property type="entry name" value="INTEIN_ENDONUCLEASE"/>
    <property type="match status" value="1"/>
</dbReference>
<dbReference type="PROSITE" id="PS50817">
    <property type="entry name" value="INTEIN_N_TER"/>
    <property type="match status" value="1"/>
</dbReference>
<reference key="1">
    <citation type="journal article" date="1996" name="Science">
        <title>Complete genome sequence of the methanogenic archaeon, Methanococcus jannaschii.</title>
        <authorList>
            <person name="Bult C.J."/>
            <person name="White O."/>
            <person name="Olsen G.J."/>
            <person name="Zhou L."/>
            <person name="Fleischmann R.D."/>
            <person name="Sutton G.G."/>
            <person name="Blake J.A."/>
            <person name="FitzGerald L.M."/>
            <person name="Clayton R.A."/>
            <person name="Gocayne J.D."/>
            <person name="Kerlavage A.R."/>
            <person name="Dougherty B.A."/>
            <person name="Tomb J.-F."/>
            <person name="Adams M.D."/>
            <person name="Reich C.I."/>
            <person name="Overbeek R."/>
            <person name="Kirkness E.F."/>
            <person name="Weinstock K.G."/>
            <person name="Merrick J.M."/>
            <person name="Glodek A."/>
            <person name="Scott J.L."/>
            <person name="Geoghagen N.S.M."/>
            <person name="Weidman J.F."/>
            <person name="Fuhrmann J.L."/>
            <person name="Nguyen D."/>
            <person name="Utterback T.R."/>
            <person name="Kelley J.M."/>
            <person name="Peterson J.D."/>
            <person name="Sadow P.W."/>
            <person name="Hanna M.C."/>
            <person name="Cotton M.D."/>
            <person name="Roberts K.M."/>
            <person name="Hurst M.A."/>
            <person name="Kaine B.P."/>
            <person name="Borodovsky M."/>
            <person name="Klenk H.-P."/>
            <person name="Fraser C.M."/>
            <person name="Smith H.O."/>
            <person name="Woese C.R."/>
            <person name="Venter J.C."/>
        </authorList>
    </citation>
    <scope>NUCLEOTIDE SEQUENCE [LARGE SCALE GENOMIC DNA]</scope>
    <source>
        <strain>ATCC 43067 / DSM 2661 / JAL-1 / JCM 10045 / NBRC 100440</strain>
    </source>
</reference>